<comment type="function">
    <text evidence="5">Hydrolyzes p-nitrophenyl-beta-D-galactopyranoside (PNPG), o-nitrophenyl-beta-D-galactopyranoside (ONPG) and chromogen 5-bromo-4-chloro-3-indolyl-beta-D-galactopyranoside (X-gal), with highest activity against PNPG. Also acts on p-nitrophenyl-beta-D-glucopyranoside (PNPGlu) and o-nitrophenyl-beta-D-glucopyranoside (ONPGlu), but with significantly lower activity.</text>
</comment>
<comment type="catalytic activity">
    <reaction evidence="5">
        <text>Hydrolysis of terminal non-reducing beta-D-galactose residues in beta-D-galactosides.</text>
        <dbReference type="EC" id="3.2.1.23"/>
    </reaction>
</comment>
<comment type="activity regulation">
    <text evidence="5">Strongly inhibited by glucose. No activity is lost during treatment with 100 mM EDTA after 2 hours. Activity not considerably affected by metal ions (5 mM), including Na(+), K(+), Mg(2+), Co(2+) and Ca(2+). Completely inhibited by Cu(2+) and Zn(2+) (5 mM) and is strongly inhibited by Mn(2+) (11%), Fe(2+) (25%) and Ni(2+) (38%) in comparison with the activity in the absence of cations (100%). Activity not affected by dithiothreitol, beta-mercaptoethanol and L-cysteine whereas reduced glutathione almost completely inactivates it. With ONPG as substrate, the addition of ethanol up to 20% still slightly stimulates activity. The activity increases up to 120% in the presence of 8% v/v ethanol at pH 5.5.</text>
</comment>
<comment type="biophysicochemical properties">
    <kinetics>
        <KM evidence="5">5.75 mM for ONPG (at 10 degrees Celsius)</KM>
        <KM evidence="5">4.86 mM for ONPG (at 20 degrees Celsius)</KM>
        <KM evidence="5">3.46 mM for ONPG (at 30 degrees Celsius)</KM>
        <KM evidence="5">3.15 mM for ONPG (at 40 degrees Celsius)</KM>
        <KM evidence="5">2.62 mM for ONPG (at 50 degrees Celsius)</KM>
        <KM evidence="5">5.11 mM for ONPG (at 55 degrees Celsius)</KM>
        <KM evidence="5">77.54 mM for lactose (at 10 degrees Celsius)</KM>
        <KM evidence="5">67.82 mM for lactose (at 20 degrees Celsius)</KM>
        <KM evidence="5">52.67 mM for lactose (at 30 degrees Celsius)</KM>
        <KM evidence="5">44.31 mM for lactose (at 40 degrees Celsius)</KM>
        <KM evidence="5">39.73 mM for lactose (at 50 degrees Celsius)</KM>
    </kinetics>
    <phDependence>
        <text evidence="5">Optimum pH is 6.5 with ONPG as substrate. Over 90% of activity in the pH range 6.5-8.5. Highly efficient at pH range 4.5-9.5.</text>
    </phDependence>
    <temperatureDependence>
        <text evidence="5">Optimum temperature is 50 degrees Celsius with ONPG as substrate. Active at 4-8 degrees Celsius. 60% of the maximum activity is detected at 25 degrees Celsius and 15% at 0 degrees Celsius. Over 50% activity at 30 degrees Celsius.</text>
    </temperatureDependence>
</comment>
<comment type="subunit">
    <text evidence="5">Homotrimer.</text>
</comment>
<comment type="biotechnology">
    <text evidence="5">Has potential use in lactose removal in milk and dairy products at low temperatures and for cheese whey bioremediation processes with simultaneous bio-ethanol production.</text>
</comment>
<comment type="similarity">
    <text evidence="3">Belongs to the glycosyl hydrolase 42 family.</text>
</comment>
<evidence type="ECO:0000250" key="1">
    <source>
        <dbReference type="UniProtKB" id="O69315"/>
    </source>
</evidence>
<evidence type="ECO:0000250" key="2">
    <source>
        <dbReference type="UniProtKB" id="P19668"/>
    </source>
</evidence>
<evidence type="ECO:0000255" key="3"/>
<evidence type="ECO:0000256" key="4">
    <source>
        <dbReference type="SAM" id="MobiDB-lite"/>
    </source>
</evidence>
<evidence type="ECO:0000269" key="5">
    <source>
    </source>
</evidence>
<evidence type="ECO:0000305" key="6"/>
<evidence type="ECO:0000312" key="7">
    <source>
        <dbReference type="EMBL" id="ACU00913.1"/>
    </source>
</evidence>
<feature type="chain" id="PRO_0000407681" description="Beta-galactosidase">
    <location>
        <begin position="1"/>
        <end position="694"/>
    </location>
</feature>
<feature type="region of interest" description="Disordered" evidence="4">
    <location>
        <begin position="1"/>
        <end position="31"/>
    </location>
</feature>
<feature type="compositionally biased region" description="Polar residues" evidence="4">
    <location>
        <begin position="22"/>
        <end position="31"/>
    </location>
</feature>
<feature type="active site" description="Proton donor" evidence="1">
    <location>
        <position position="183"/>
    </location>
</feature>
<feature type="active site" description="Nucleophile" evidence="1">
    <location>
        <position position="341"/>
    </location>
</feature>
<feature type="binding site" evidence="1">
    <location>
        <position position="144"/>
    </location>
    <ligand>
        <name>substrate</name>
    </ligand>
</feature>
<feature type="binding site" evidence="1">
    <location>
        <position position="182"/>
    </location>
    <ligand>
        <name>substrate</name>
    </ligand>
</feature>
<feature type="binding site" evidence="1">
    <location>
        <position position="349"/>
    </location>
    <ligand>
        <name>substrate</name>
    </ligand>
</feature>
<feature type="binding site" evidence="1">
    <location>
        <begin position="389"/>
        <end position="392"/>
    </location>
    <ligand>
        <name>substrate</name>
    </ligand>
</feature>
<reference evidence="6 7" key="1">
    <citation type="journal article" date="2009" name="BMC Microbiol.">
        <title>A new cold-adapted beta-D-galactosidase from the Antarctic Arthrobacter sp. 32c - gene cloning, overexpression, purification and properties.</title>
        <authorList>
            <person name="Hildebrandt P."/>
            <person name="Wanarska M."/>
            <person name="Kur J."/>
        </authorList>
    </citation>
    <scope>NUCLEOTIDE SEQUENCE [GENOMIC DNA]</scope>
    <scope>FUNCTION</scope>
    <scope>CATALYTIC ACTIVITY</scope>
    <scope>ACTIVITY REGULATION</scope>
    <scope>BIOPHYSICOCHEMICAL PROPERTIES</scope>
    <scope>SUBUNIT</scope>
    <scope>BIOTECHNOLOGY</scope>
    <source>
        <strain evidence="7">32c</strain>
    </source>
</reference>
<keyword id="KW-0326">Glycosidase</keyword>
<keyword id="KW-0378">Hydrolase</keyword>
<sequence length="694" mass="75915">MGKRFPSGWFSPRVHPPRRQRSPMTNQATPGTASVWNNIEGIGFGGDYNPEQWPVSVRLEDLELMQEAGVNFLSVGIFSWALLEPAEGQYDFGWLDDVMDNLHGIGVKVALATATAAPPAWLVRKHPEILPVTADGTTLGPGSRRHYTPSSAVYRKYAAGITRVLAERYKDHPALALWHVDNELGCHVSEFYGEEDAAAFRLWLERRYGTIDALNAAWGTAFWSQHYGSFEEILPPGVAPSTLNPGQQLDFQRFNSWALMDYYRSLVAVLREVTPAVPCTTNLMASSATKSMDYFSWAKDLDVIANDHYLVAADPERHIELAFSADLTRGIAGGDPWILMEHSTSAVNWQPRNQPKMPGEMLRNSLAHVARGADAVMFFQWRQSFAGSEKFHSAMVPHGGRDTRVWREVVDLGAALQLLAPVRGSRVESRAAIVFDYEAWWASEIDSKPSIDVRYLDLLRAFHRSLFLRGVSVDMVHPSASLDGYDLVLVCTLYSVTDEAAANIAAAAAGGATVLVSYFSGITDEKDHVRLGGYPGAFRELLGVRVEEFHPLLAGSQLKLSDGTVSSIWSEHVHLDGAEAFQTFTGYPLEGVPSLTRRAVGTGAAWYLATFPDRDGIESLVDRLLAESGVSPVAEADAGVELTRRRSADGGSFLFAINHTRAAASVRASGTDVLSGERFTGTVEAGSVAVIAED</sequence>
<accession>C7ASJ5</accession>
<dbReference type="EC" id="3.2.1.23"/>
<dbReference type="EMBL" id="FJ609657">
    <property type="protein sequence ID" value="ACU00913.1"/>
    <property type="molecule type" value="Genomic_DNA"/>
</dbReference>
<dbReference type="SMR" id="C7ASJ5"/>
<dbReference type="CAZy" id="GH42">
    <property type="family name" value="Glycoside Hydrolase Family 42"/>
</dbReference>
<dbReference type="BRENDA" id="3.2.1.23">
    <property type="organism ID" value="457"/>
</dbReference>
<dbReference type="GO" id="GO:0009341">
    <property type="term" value="C:beta-galactosidase complex"/>
    <property type="evidence" value="ECO:0007669"/>
    <property type="project" value="InterPro"/>
</dbReference>
<dbReference type="GO" id="GO:0004565">
    <property type="term" value="F:beta-galactosidase activity"/>
    <property type="evidence" value="ECO:0007669"/>
    <property type="project" value="UniProtKB-EC"/>
</dbReference>
<dbReference type="GO" id="GO:0006012">
    <property type="term" value="P:galactose metabolic process"/>
    <property type="evidence" value="ECO:0007669"/>
    <property type="project" value="InterPro"/>
</dbReference>
<dbReference type="CDD" id="cd03143">
    <property type="entry name" value="A4_beta-galactosidase_middle_domain"/>
    <property type="match status" value="1"/>
</dbReference>
<dbReference type="Gene3D" id="3.40.50.880">
    <property type="match status" value="1"/>
</dbReference>
<dbReference type="Gene3D" id="3.20.20.80">
    <property type="entry name" value="Glycosidases"/>
    <property type="match status" value="1"/>
</dbReference>
<dbReference type="Gene3D" id="2.60.40.1180">
    <property type="entry name" value="Golgi alpha-mannosidase II"/>
    <property type="match status" value="1"/>
</dbReference>
<dbReference type="InterPro" id="IPR013739">
    <property type="entry name" value="Beta_galactosidase_C"/>
</dbReference>
<dbReference type="InterPro" id="IPR013738">
    <property type="entry name" value="Beta_galactosidase_Trimer"/>
</dbReference>
<dbReference type="InterPro" id="IPR029062">
    <property type="entry name" value="Class_I_gatase-like"/>
</dbReference>
<dbReference type="InterPro" id="IPR003476">
    <property type="entry name" value="Glyco_hydro_42"/>
</dbReference>
<dbReference type="InterPro" id="IPR013529">
    <property type="entry name" value="Glyco_hydro_42_N"/>
</dbReference>
<dbReference type="InterPro" id="IPR013780">
    <property type="entry name" value="Glyco_hydro_b"/>
</dbReference>
<dbReference type="InterPro" id="IPR017853">
    <property type="entry name" value="Glycoside_hydrolase_SF"/>
</dbReference>
<dbReference type="PANTHER" id="PTHR36447">
    <property type="entry name" value="BETA-GALACTOSIDASE GANA"/>
    <property type="match status" value="1"/>
</dbReference>
<dbReference type="PANTHER" id="PTHR36447:SF1">
    <property type="entry name" value="BETA-GALACTOSIDASE GANA"/>
    <property type="match status" value="1"/>
</dbReference>
<dbReference type="Pfam" id="PF02449">
    <property type="entry name" value="Glyco_hydro_42"/>
    <property type="match status" value="1"/>
</dbReference>
<dbReference type="Pfam" id="PF08533">
    <property type="entry name" value="Glyco_hydro_42C"/>
    <property type="match status" value="1"/>
</dbReference>
<dbReference type="Pfam" id="PF08532">
    <property type="entry name" value="Glyco_hydro_42M"/>
    <property type="match status" value="1"/>
</dbReference>
<dbReference type="PIRSF" id="PIRSF001084">
    <property type="entry name" value="B-galactosidase"/>
    <property type="match status" value="1"/>
</dbReference>
<dbReference type="SUPFAM" id="SSF51445">
    <property type="entry name" value="(Trans)glycosidases"/>
    <property type="match status" value="1"/>
</dbReference>
<dbReference type="SUPFAM" id="SSF52317">
    <property type="entry name" value="Class I glutamine amidotransferase-like"/>
    <property type="match status" value="1"/>
</dbReference>
<organism>
    <name type="scientific">Arthrobacter sp</name>
    <dbReference type="NCBI Taxonomy" id="1667"/>
    <lineage>
        <taxon>Bacteria</taxon>
        <taxon>Bacillati</taxon>
        <taxon>Actinomycetota</taxon>
        <taxon>Actinomycetes</taxon>
        <taxon>Micrococcales</taxon>
        <taxon>Micrococcaceae</taxon>
        <taxon>Arthrobacter</taxon>
    </lineage>
</organism>
<name>BGAL2_ARTSP</name>
<proteinExistence type="evidence at protein level"/>
<protein>
    <recommendedName>
        <fullName>Beta-galactosidase</fullName>
        <shortName evidence="2">Beta-gal</shortName>
        <ecNumber>3.2.1.23</ecNumber>
    </recommendedName>
</protein>